<organism>
    <name type="scientific">Mycolicibacterium vanbaalenii (strain DSM 7251 / JCM 13017 / BCRC 16820 / KCTC 9966 / NRRL B-24157 / PYR-1)</name>
    <name type="common">Mycobacterium vanbaalenii</name>
    <dbReference type="NCBI Taxonomy" id="350058"/>
    <lineage>
        <taxon>Bacteria</taxon>
        <taxon>Bacillati</taxon>
        <taxon>Actinomycetota</taxon>
        <taxon>Actinomycetes</taxon>
        <taxon>Mycobacteriales</taxon>
        <taxon>Mycobacteriaceae</taxon>
        <taxon>Mycolicibacterium</taxon>
    </lineage>
</organism>
<accession>A1T6Z8</accession>
<evidence type="ECO:0000255" key="1">
    <source>
        <dbReference type="HAMAP-Rule" id="MF_00022"/>
    </source>
</evidence>
<feature type="chain" id="PRO_1000001925" description="Glutamate--tRNA ligase">
    <location>
        <begin position="1"/>
        <end position="495"/>
    </location>
</feature>
<feature type="short sequence motif" description="'HIGH' region" evidence="1">
    <location>
        <begin position="13"/>
        <end position="23"/>
    </location>
</feature>
<feature type="short sequence motif" description="'KMSKS' region" evidence="1">
    <location>
        <begin position="257"/>
        <end position="261"/>
    </location>
</feature>
<feature type="binding site" evidence="1">
    <location>
        <position position="260"/>
    </location>
    <ligand>
        <name>ATP</name>
        <dbReference type="ChEBI" id="CHEBI:30616"/>
    </ligand>
</feature>
<sequence length="495" mass="54424">MTTSDVVRVRFCPSPTGTPHVGLIRTALFNWAYARHTGGTFVFRIEDTDSARDSEDSYLALLDALRWLGMDWDEGPEIGGPYGPYRQSQRLDIYTDVIERLLAAGEAYEAFSTAEEVEARHIAAGRNPKLGYDNYDRDLTEEQRAAFRAEGRRPVVRLRMPDTDLTWVDLVRGETTFPAGSVPDFALTRGNGEPLYPLVNPVDDALMKITHVLRGEDLLPSTPRQLALYGALIRIGVADTTPQFAHLPSVLGEGNKKLSKRDPQSNLFLHRDRGFIPEGLLNYLALLGWSIADDHDIFSLEEMVAAFDVADVNSSPARFDQKKADALNAEHIRLLDEAEFARRLGAYFATHGHRTGLDDAQFAEAARLVQTRIVVLGDAWELLKFLDDASFTLDEKSAAKELKAEAVPVLGAALEALRGVEAWDTAAIEEALKGALIDRLELKPRKAFGPVRVAATGSSVSPPLFESLELLGRDRSLARLQAGRDHAAAAAAPQG</sequence>
<reference key="1">
    <citation type="submission" date="2006-12" db="EMBL/GenBank/DDBJ databases">
        <title>Complete sequence of Mycobacterium vanbaalenii PYR-1.</title>
        <authorList>
            <consortium name="US DOE Joint Genome Institute"/>
            <person name="Copeland A."/>
            <person name="Lucas S."/>
            <person name="Lapidus A."/>
            <person name="Barry K."/>
            <person name="Detter J.C."/>
            <person name="Glavina del Rio T."/>
            <person name="Hammon N."/>
            <person name="Israni S."/>
            <person name="Dalin E."/>
            <person name="Tice H."/>
            <person name="Pitluck S."/>
            <person name="Singan V."/>
            <person name="Schmutz J."/>
            <person name="Larimer F."/>
            <person name="Land M."/>
            <person name="Hauser L."/>
            <person name="Kyrpides N."/>
            <person name="Anderson I.J."/>
            <person name="Miller C."/>
            <person name="Richardson P."/>
        </authorList>
    </citation>
    <scope>NUCLEOTIDE SEQUENCE [LARGE SCALE GENOMIC DNA]</scope>
    <source>
        <strain>DSM 7251 / JCM 13017 / BCRC 16820 / KCTC 9966 / NRRL B-24157 / PYR-1</strain>
    </source>
</reference>
<protein>
    <recommendedName>
        <fullName evidence="1">Glutamate--tRNA ligase</fullName>
        <ecNumber evidence="1">6.1.1.17</ecNumber>
    </recommendedName>
    <alternativeName>
        <fullName evidence="1">Glutamyl-tRNA synthetase</fullName>
        <shortName evidence="1">GluRS</shortName>
    </alternativeName>
</protein>
<keyword id="KW-0030">Aminoacyl-tRNA synthetase</keyword>
<keyword id="KW-0067">ATP-binding</keyword>
<keyword id="KW-0963">Cytoplasm</keyword>
<keyword id="KW-0436">Ligase</keyword>
<keyword id="KW-0547">Nucleotide-binding</keyword>
<keyword id="KW-0648">Protein biosynthesis</keyword>
<name>SYE_MYCVP</name>
<comment type="function">
    <text evidence="1">Catalyzes the attachment of glutamate to tRNA(Glu) in a two-step reaction: glutamate is first activated by ATP to form Glu-AMP and then transferred to the acceptor end of tRNA(Glu).</text>
</comment>
<comment type="catalytic activity">
    <reaction evidence="1">
        <text>tRNA(Glu) + L-glutamate + ATP = L-glutamyl-tRNA(Glu) + AMP + diphosphate</text>
        <dbReference type="Rhea" id="RHEA:23540"/>
        <dbReference type="Rhea" id="RHEA-COMP:9663"/>
        <dbReference type="Rhea" id="RHEA-COMP:9680"/>
        <dbReference type="ChEBI" id="CHEBI:29985"/>
        <dbReference type="ChEBI" id="CHEBI:30616"/>
        <dbReference type="ChEBI" id="CHEBI:33019"/>
        <dbReference type="ChEBI" id="CHEBI:78442"/>
        <dbReference type="ChEBI" id="CHEBI:78520"/>
        <dbReference type="ChEBI" id="CHEBI:456215"/>
        <dbReference type="EC" id="6.1.1.17"/>
    </reaction>
</comment>
<comment type="subunit">
    <text evidence="1">Monomer.</text>
</comment>
<comment type="subcellular location">
    <subcellularLocation>
        <location evidence="1">Cytoplasm</location>
    </subcellularLocation>
</comment>
<comment type="similarity">
    <text evidence="1">Belongs to the class-I aminoacyl-tRNA synthetase family. Glutamate--tRNA ligase type 1 subfamily.</text>
</comment>
<dbReference type="EC" id="6.1.1.17" evidence="1"/>
<dbReference type="EMBL" id="CP000511">
    <property type="protein sequence ID" value="ABM12948.1"/>
    <property type="molecule type" value="Genomic_DNA"/>
</dbReference>
<dbReference type="RefSeq" id="WP_011779362.1">
    <property type="nucleotide sequence ID" value="NC_008726.1"/>
</dbReference>
<dbReference type="SMR" id="A1T6Z8"/>
<dbReference type="STRING" id="350058.Mvan_2133"/>
<dbReference type="KEGG" id="mva:Mvan_2133"/>
<dbReference type="eggNOG" id="COG0008">
    <property type="taxonomic scope" value="Bacteria"/>
</dbReference>
<dbReference type="HOGENOM" id="CLU_015768_6_1_11"/>
<dbReference type="Proteomes" id="UP000009159">
    <property type="component" value="Chromosome"/>
</dbReference>
<dbReference type="GO" id="GO:0005829">
    <property type="term" value="C:cytosol"/>
    <property type="evidence" value="ECO:0007669"/>
    <property type="project" value="TreeGrafter"/>
</dbReference>
<dbReference type="GO" id="GO:0005524">
    <property type="term" value="F:ATP binding"/>
    <property type="evidence" value="ECO:0007669"/>
    <property type="project" value="UniProtKB-UniRule"/>
</dbReference>
<dbReference type="GO" id="GO:0004818">
    <property type="term" value="F:glutamate-tRNA ligase activity"/>
    <property type="evidence" value="ECO:0007669"/>
    <property type="project" value="UniProtKB-UniRule"/>
</dbReference>
<dbReference type="GO" id="GO:0000049">
    <property type="term" value="F:tRNA binding"/>
    <property type="evidence" value="ECO:0007669"/>
    <property type="project" value="InterPro"/>
</dbReference>
<dbReference type="GO" id="GO:0008270">
    <property type="term" value="F:zinc ion binding"/>
    <property type="evidence" value="ECO:0007669"/>
    <property type="project" value="InterPro"/>
</dbReference>
<dbReference type="GO" id="GO:0006424">
    <property type="term" value="P:glutamyl-tRNA aminoacylation"/>
    <property type="evidence" value="ECO:0007669"/>
    <property type="project" value="UniProtKB-UniRule"/>
</dbReference>
<dbReference type="CDD" id="cd00808">
    <property type="entry name" value="GluRS_core"/>
    <property type="match status" value="1"/>
</dbReference>
<dbReference type="FunFam" id="3.40.50.620:FF:000149">
    <property type="entry name" value="Glutamate--tRNA ligase"/>
    <property type="match status" value="1"/>
</dbReference>
<dbReference type="Gene3D" id="1.10.10.350">
    <property type="match status" value="1"/>
</dbReference>
<dbReference type="Gene3D" id="1.10.8.70">
    <property type="entry name" value="Glutamate-tRNA synthetase, class I, anticodon-binding domain 1"/>
    <property type="match status" value="1"/>
</dbReference>
<dbReference type="Gene3D" id="1.10.1160.10">
    <property type="entry name" value="Glutamyl-trna Synthetase, Domain 2"/>
    <property type="match status" value="1"/>
</dbReference>
<dbReference type="Gene3D" id="3.90.800.10">
    <property type="entry name" value="Glutamyl-tRNA Synthetase, Domain 3"/>
    <property type="match status" value="1"/>
</dbReference>
<dbReference type="Gene3D" id="3.40.50.620">
    <property type="entry name" value="HUPs"/>
    <property type="match status" value="1"/>
</dbReference>
<dbReference type="HAMAP" id="MF_00022">
    <property type="entry name" value="Glu_tRNA_synth_type1"/>
    <property type="match status" value="1"/>
</dbReference>
<dbReference type="InterPro" id="IPR045462">
    <property type="entry name" value="aa-tRNA-synth_I_cd-bd"/>
</dbReference>
<dbReference type="InterPro" id="IPR020751">
    <property type="entry name" value="aa-tRNA-synth_I_codon-bd_sub2"/>
</dbReference>
<dbReference type="InterPro" id="IPR008925">
    <property type="entry name" value="aa_tRNA-synth_I_cd-bd_sf"/>
</dbReference>
<dbReference type="InterPro" id="IPR004527">
    <property type="entry name" value="Glu-tRNA-ligase_bac/mito"/>
</dbReference>
<dbReference type="InterPro" id="IPR020752">
    <property type="entry name" value="Glu-tRNA-synth_I_codon-bd_sub1"/>
</dbReference>
<dbReference type="InterPro" id="IPR000924">
    <property type="entry name" value="Glu/Gln-tRNA-synth"/>
</dbReference>
<dbReference type="InterPro" id="IPR020058">
    <property type="entry name" value="Glu/Gln-tRNA-synth_Ib_cat-dom"/>
</dbReference>
<dbReference type="InterPro" id="IPR020061">
    <property type="entry name" value="Glu_tRNA_lig_a-bdl"/>
</dbReference>
<dbReference type="InterPro" id="IPR049940">
    <property type="entry name" value="GluQ/Sye"/>
</dbReference>
<dbReference type="InterPro" id="IPR033910">
    <property type="entry name" value="GluRS_core"/>
</dbReference>
<dbReference type="InterPro" id="IPR014729">
    <property type="entry name" value="Rossmann-like_a/b/a_fold"/>
</dbReference>
<dbReference type="NCBIfam" id="TIGR00464">
    <property type="entry name" value="gltX_bact"/>
    <property type="match status" value="1"/>
</dbReference>
<dbReference type="PANTHER" id="PTHR43311">
    <property type="entry name" value="GLUTAMATE--TRNA LIGASE"/>
    <property type="match status" value="1"/>
</dbReference>
<dbReference type="PANTHER" id="PTHR43311:SF2">
    <property type="entry name" value="GLUTAMATE--TRNA LIGASE, MITOCHONDRIAL-RELATED"/>
    <property type="match status" value="1"/>
</dbReference>
<dbReference type="Pfam" id="PF19269">
    <property type="entry name" value="Anticodon_2"/>
    <property type="match status" value="1"/>
</dbReference>
<dbReference type="Pfam" id="PF00749">
    <property type="entry name" value="tRNA-synt_1c"/>
    <property type="match status" value="1"/>
</dbReference>
<dbReference type="PRINTS" id="PR00987">
    <property type="entry name" value="TRNASYNTHGLU"/>
</dbReference>
<dbReference type="SUPFAM" id="SSF48163">
    <property type="entry name" value="An anticodon-binding domain of class I aminoacyl-tRNA synthetases"/>
    <property type="match status" value="1"/>
</dbReference>
<dbReference type="SUPFAM" id="SSF52374">
    <property type="entry name" value="Nucleotidylyl transferase"/>
    <property type="match status" value="1"/>
</dbReference>
<proteinExistence type="inferred from homology"/>
<gene>
    <name evidence="1" type="primary">gltX</name>
    <name type="ordered locus">Mvan_2133</name>
</gene>